<geneLocation type="plasmid">
    <name>megaplasmid Rsp</name>
</geneLocation>
<protein>
    <recommendedName>
        <fullName evidence="1">Divalent metal cation transporter MntH</fullName>
    </recommendedName>
</protein>
<feature type="chain" id="PRO_0000212630" description="Divalent metal cation transporter MntH">
    <location>
        <begin position="1"/>
        <end position="442"/>
    </location>
</feature>
<feature type="transmembrane region" description="Helical" evidence="1">
    <location>
        <begin position="67"/>
        <end position="87"/>
    </location>
</feature>
<feature type="transmembrane region" description="Helical" evidence="1">
    <location>
        <begin position="141"/>
        <end position="163"/>
    </location>
</feature>
<feature type="transmembrane region" description="Helical" evidence="1">
    <location>
        <begin position="173"/>
        <end position="193"/>
    </location>
</feature>
<feature type="transmembrane region" description="Helical" evidence="1">
    <location>
        <begin position="216"/>
        <end position="236"/>
    </location>
</feature>
<feature type="transmembrane region" description="Helical" evidence="1">
    <location>
        <begin position="264"/>
        <end position="284"/>
    </location>
</feature>
<feature type="transmembrane region" description="Helical" evidence="1">
    <location>
        <begin position="302"/>
        <end position="322"/>
    </location>
</feature>
<feature type="transmembrane region" description="Helical" evidence="1">
    <location>
        <begin position="357"/>
        <end position="377"/>
    </location>
</feature>
<feature type="transmembrane region" description="Helical" evidence="1">
    <location>
        <begin position="379"/>
        <end position="399"/>
    </location>
</feature>
<feature type="transmembrane region" description="Helical" evidence="1">
    <location>
        <begin position="420"/>
        <end position="440"/>
    </location>
</feature>
<proteinExistence type="inferred from homology"/>
<sequence length="442" mass="47231">MFRLPALPRIPTAPFCPSEVRGCVAIPPDLPLWKKLLRFAGPGLLVSVGYMDPGNWATDIEAGSRYGYSLLFVVLLSSLAAMVLQCLSARLGIVTGKDLARLSRERYRPGAVRVQWLLAELSIVACDLAEVLGCALAFHLLLGVPILGGVALTALDTLIVLGLKGKNFRQLEAIVLGLILTIGLCYFVELALIRPHWPSVAGALVPSWQALSAREPLYLAIGILGATVMPHNLYLHSSIVQTRVVSETEPARREAVGLSRLDTIVSLSLALLVNGAILVLAAAAFHANGHQDVADIQDAHRLLEPIVGTAVAGVLFGIALLAAGQSSTFTGTIAGQILMEGFLELRIPCWQRRLATRALALIPAFVGVAMLGDHAIGRLLVISQVVLGFQLPFAMFPLIRMTGDRALMGTFANGRLTSAVAWCLFAVISVANLWLVWQVLAG</sequence>
<organism>
    <name type="scientific">Ralstonia nicotianae (strain ATCC BAA-1114 / GMI1000)</name>
    <name type="common">Ralstonia solanacearum</name>
    <dbReference type="NCBI Taxonomy" id="267608"/>
    <lineage>
        <taxon>Bacteria</taxon>
        <taxon>Pseudomonadati</taxon>
        <taxon>Pseudomonadota</taxon>
        <taxon>Betaproteobacteria</taxon>
        <taxon>Burkholderiales</taxon>
        <taxon>Burkholderiaceae</taxon>
        <taxon>Ralstonia</taxon>
        <taxon>Ralstonia solanacearum species complex</taxon>
    </lineage>
</organism>
<reference key="1">
    <citation type="journal article" date="2002" name="Nature">
        <title>Genome sequence of the plant pathogen Ralstonia solanacearum.</title>
        <authorList>
            <person name="Salanoubat M."/>
            <person name="Genin S."/>
            <person name="Artiguenave F."/>
            <person name="Gouzy J."/>
            <person name="Mangenot S."/>
            <person name="Arlat M."/>
            <person name="Billault A."/>
            <person name="Brottier P."/>
            <person name="Camus J.-C."/>
            <person name="Cattolico L."/>
            <person name="Chandler M."/>
            <person name="Choisne N."/>
            <person name="Claudel-Renard C."/>
            <person name="Cunnac S."/>
            <person name="Demange N."/>
            <person name="Gaspin C."/>
            <person name="Lavie M."/>
            <person name="Moisan A."/>
            <person name="Robert C."/>
            <person name="Saurin W."/>
            <person name="Schiex T."/>
            <person name="Siguier P."/>
            <person name="Thebault P."/>
            <person name="Whalen M."/>
            <person name="Wincker P."/>
            <person name="Levy M."/>
            <person name="Weissenbach J."/>
            <person name="Boucher C.A."/>
        </authorList>
    </citation>
    <scope>NUCLEOTIDE SEQUENCE [LARGE SCALE GENOMIC DNA]</scope>
    <source>
        <strain>ATCC BAA-1114 / GMI1000</strain>
    </source>
</reference>
<keyword id="KW-0997">Cell inner membrane</keyword>
<keyword id="KW-1003">Cell membrane</keyword>
<keyword id="KW-0406">Ion transport</keyword>
<keyword id="KW-0472">Membrane</keyword>
<keyword id="KW-0614">Plasmid</keyword>
<keyword id="KW-1185">Reference proteome</keyword>
<keyword id="KW-0769">Symport</keyword>
<keyword id="KW-0812">Transmembrane</keyword>
<keyword id="KW-1133">Transmembrane helix</keyword>
<keyword id="KW-0813">Transport</keyword>
<accession>Q8XSF6</accession>
<evidence type="ECO:0000255" key="1">
    <source>
        <dbReference type="HAMAP-Rule" id="MF_00221"/>
    </source>
</evidence>
<dbReference type="EMBL" id="AL646053">
    <property type="protein sequence ID" value="CAD17671.1"/>
    <property type="molecule type" value="Genomic_DNA"/>
</dbReference>
<dbReference type="RefSeq" id="WP_011003823.1">
    <property type="nucleotide sequence ID" value="NC_003296.1"/>
</dbReference>
<dbReference type="SMR" id="Q8XSF6"/>
<dbReference type="STRING" id="267608.RSp0520"/>
<dbReference type="EnsemblBacteria" id="CAD17671">
    <property type="protein sequence ID" value="CAD17671"/>
    <property type="gene ID" value="RSp0520"/>
</dbReference>
<dbReference type="KEGG" id="rso:RSp0520"/>
<dbReference type="eggNOG" id="COG1914">
    <property type="taxonomic scope" value="Bacteria"/>
</dbReference>
<dbReference type="HOGENOM" id="CLU_020088_2_0_4"/>
<dbReference type="Proteomes" id="UP000001436">
    <property type="component" value="Plasmid megaplasmid Rsp"/>
</dbReference>
<dbReference type="GO" id="GO:0005886">
    <property type="term" value="C:plasma membrane"/>
    <property type="evidence" value="ECO:0007669"/>
    <property type="project" value="UniProtKB-SubCell"/>
</dbReference>
<dbReference type="GO" id="GO:0015086">
    <property type="term" value="F:cadmium ion transmembrane transporter activity"/>
    <property type="evidence" value="ECO:0007669"/>
    <property type="project" value="TreeGrafter"/>
</dbReference>
<dbReference type="GO" id="GO:0005384">
    <property type="term" value="F:manganese ion transmembrane transporter activity"/>
    <property type="evidence" value="ECO:0007669"/>
    <property type="project" value="TreeGrafter"/>
</dbReference>
<dbReference type="GO" id="GO:0046872">
    <property type="term" value="F:metal ion binding"/>
    <property type="evidence" value="ECO:0007669"/>
    <property type="project" value="UniProtKB-UniRule"/>
</dbReference>
<dbReference type="GO" id="GO:0015293">
    <property type="term" value="F:symporter activity"/>
    <property type="evidence" value="ECO:0007669"/>
    <property type="project" value="UniProtKB-UniRule"/>
</dbReference>
<dbReference type="GO" id="GO:0034755">
    <property type="term" value="P:iron ion transmembrane transport"/>
    <property type="evidence" value="ECO:0007669"/>
    <property type="project" value="TreeGrafter"/>
</dbReference>
<dbReference type="HAMAP" id="MF_00221">
    <property type="entry name" value="NRAMP"/>
    <property type="match status" value="1"/>
</dbReference>
<dbReference type="InterPro" id="IPR001046">
    <property type="entry name" value="NRAMP_fam"/>
</dbReference>
<dbReference type="NCBIfam" id="TIGR01197">
    <property type="entry name" value="nramp"/>
    <property type="match status" value="1"/>
</dbReference>
<dbReference type="NCBIfam" id="NF037982">
    <property type="entry name" value="Nramp_1"/>
    <property type="match status" value="1"/>
</dbReference>
<dbReference type="NCBIfam" id="NF001923">
    <property type="entry name" value="PRK00701.1"/>
    <property type="match status" value="1"/>
</dbReference>
<dbReference type="PANTHER" id="PTHR11706:SF33">
    <property type="entry name" value="NATURAL RESISTANCE-ASSOCIATED MACROPHAGE PROTEIN 2"/>
    <property type="match status" value="1"/>
</dbReference>
<dbReference type="PANTHER" id="PTHR11706">
    <property type="entry name" value="SOLUTE CARRIER PROTEIN FAMILY 11 MEMBER"/>
    <property type="match status" value="1"/>
</dbReference>
<dbReference type="Pfam" id="PF01566">
    <property type="entry name" value="Nramp"/>
    <property type="match status" value="1"/>
</dbReference>
<dbReference type="PRINTS" id="PR00447">
    <property type="entry name" value="NATRESASSCMP"/>
</dbReference>
<gene>
    <name evidence="1" type="primary">mntH</name>
    <name type="ordered locus">RSp0520</name>
    <name type="ORF">RS00399</name>
</gene>
<comment type="function">
    <text evidence="1">H(+)-stimulated, divalent metal cation uptake system.</text>
</comment>
<comment type="subcellular location">
    <subcellularLocation>
        <location evidence="1">Cell inner membrane</location>
        <topology evidence="1">Multi-pass membrane protein</topology>
    </subcellularLocation>
</comment>
<comment type="similarity">
    <text evidence="1">Belongs to the NRAMP family.</text>
</comment>
<name>MNTH_RALN1</name>